<proteinExistence type="evidence at protein level"/>
<keyword id="KW-0002">3D-structure</keyword>
<keyword id="KW-0903">Direct protein sequencing</keyword>
<keyword id="KW-0597">Phosphoprotein</keyword>
<keyword id="KW-1185">Reference proteome</keyword>
<keyword id="KW-0346">Stress response</keyword>
<protein>
    <recommendedName>
        <fullName>12 kDa heat shock protein</fullName>
    </recommendedName>
    <alternativeName>
        <fullName>Glucose and lipid-regulated protein</fullName>
    </alternativeName>
</protein>
<feature type="chain" id="PRO_0000084081" description="12 kDa heat shock protein">
    <location>
        <begin position="1"/>
        <end position="109"/>
    </location>
</feature>
<feature type="region of interest" description="Disordered" evidence="1">
    <location>
        <begin position="1"/>
        <end position="82"/>
    </location>
</feature>
<feature type="compositionally biased region" description="Basic and acidic residues" evidence="1">
    <location>
        <begin position="1"/>
        <end position="21"/>
    </location>
</feature>
<feature type="compositionally biased region" description="Basic and acidic residues" evidence="1">
    <location>
        <begin position="28"/>
        <end position="50"/>
    </location>
</feature>
<feature type="compositionally biased region" description="Basic and acidic residues" evidence="1">
    <location>
        <begin position="58"/>
        <end position="67"/>
    </location>
</feature>
<feature type="modified residue" description="Phosphoserine; by ATM or ATR" evidence="4 5 6">
    <location>
        <position position="21"/>
    </location>
</feature>
<feature type="modified residue" description="Phosphoserine" evidence="6">
    <location>
        <position position="24"/>
    </location>
</feature>
<feature type="modified residue" description="Phosphoserine" evidence="5 6">
    <location>
        <position position="59"/>
    </location>
</feature>
<feature type="modified residue" description="Phosphoserine" evidence="5 6">
    <location>
        <position position="73"/>
    </location>
</feature>
<feature type="modified residue" description="Phosphoserine" evidence="5 6">
    <location>
        <position position="97"/>
    </location>
</feature>
<feature type="sequence variant" description="In strain: Ar5-H12.">
    <original>P</original>
    <variation>T</variation>
    <location>
        <position position="46"/>
    </location>
</feature>
<feature type="helix" evidence="7">
    <location>
        <begin position="8"/>
        <end position="17"/>
    </location>
</feature>
<feature type="helix" evidence="7">
    <location>
        <begin position="25"/>
        <end position="42"/>
    </location>
</feature>
<feature type="helix" evidence="7">
    <location>
        <begin position="53"/>
        <end position="56"/>
    </location>
</feature>
<feature type="helix" evidence="7">
    <location>
        <begin position="58"/>
        <end position="61"/>
    </location>
</feature>
<feature type="strand" evidence="8">
    <location>
        <begin position="62"/>
        <end position="64"/>
    </location>
</feature>
<feature type="strand" evidence="8">
    <location>
        <begin position="71"/>
        <end position="73"/>
    </location>
</feature>
<feature type="helix" evidence="7">
    <location>
        <begin position="74"/>
        <end position="100"/>
    </location>
</feature>
<evidence type="ECO:0000256" key="1">
    <source>
        <dbReference type="SAM" id="MobiDB-lite"/>
    </source>
</evidence>
<evidence type="ECO:0000269" key="2">
    <source>
    </source>
</evidence>
<evidence type="ECO:0000305" key="3"/>
<evidence type="ECO:0007744" key="4">
    <source>
    </source>
</evidence>
<evidence type="ECO:0007744" key="5">
    <source>
    </source>
</evidence>
<evidence type="ECO:0007744" key="6">
    <source>
    </source>
</evidence>
<evidence type="ECO:0007829" key="7">
    <source>
        <dbReference type="PDB" id="2L9Q"/>
    </source>
</evidence>
<evidence type="ECO:0007829" key="8">
    <source>
        <dbReference type="PDB" id="2LJL"/>
    </source>
</evidence>
<reference key="1">
    <citation type="journal article" date="1990" name="Gene">
        <title>Cloning, sequencing and chromosomal assignment of a gene from Saccharomyces cerevisiae which is negatively regulated by glucose and positively by lipids.</title>
        <authorList>
            <person name="Stone R.L."/>
            <person name="Matarese V."/>
            <person name="Magee B.B."/>
            <person name="Magee P.T."/>
            <person name="Bernlohr D.A."/>
        </authorList>
    </citation>
    <scope>NUCLEOTIDE SEQUENCE [GENOMIC DNA]</scope>
    <scope>PARTIAL PROTEIN SEQUENCE</scope>
    <source>
        <strain>ATCC 204508 / S288c</strain>
    </source>
</reference>
<reference key="2">
    <citation type="journal article" date="1990" name="Mol. Gen. Genet.">
        <title>HSP12, a new small heat shock gene of Saccharomyces cerevisiae: analysis of structure, regulation and function.</title>
        <authorList>
            <person name="Praekelt U.M."/>
            <person name="Meacock P.A."/>
        </authorList>
    </citation>
    <scope>NUCLEOTIDE SEQUENCE</scope>
    <source>
        <strain>ATCC 204508 / S288c</strain>
    </source>
</reference>
<reference key="3">
    <citation type="submission" date="1994-09" db="EMBL/GenBank/DDBJ databases">
        <authorList>
            <person name="Barrell B.G."/>
            <person name="Churcher C."/>
            <person name="Rajandream M.A."/>
        </authorList>
    </citation>
    <scope>NUCLEOTIDE SEQUENCE</scope>
    <source>
        <strain>ATCC 204511 / S288c / AB972</strain>
    </source>
</reference>
<reference key="4">
    <citation type="journal article" date="1995" name="Nat. Genet.">
        <title>Analysis of the nucleotide sequence of chromosome VI from Saccharomyces cerevisiae.</title>
        <authorList>
            <person name="Murakami Y."/>
            <person name="Naitou M."/>
            <person name="Hagiwara H."/>
            <person name="Shibata T."/>
            <person name="Ozawa M."/>
            <person name="Sasanuma S."/>
            <person name="Sasanuma M."/>
            <person name="Tsuchiya Y."/>
            <person name="Soeda E."/>
            <person name="Yokoyama K."/>
            <person name="Yamazaki M."/>
            <person name="Tashiro H."/>
            <person name="Eki T."/>
        </authorList>
    </citation>
    <scope>NUCLEOTIDE SEQUENCE [LARGE SCALE GENOMIC DNA]</scope>
    <source>
        <strain>ATCC 204508 / S288c</strain>
    </source>
</reference>
<reference key="5">
    <citation type="journal article" date="2014" name="G3 (Bethesda)">
        <title>The reference genome sequence of Saccharomyces cerevisiae: Then and now.</title>
        <authorList>
            <person name="Engel S.R."/>
            <person name="Dietrich F.S."/>
            <person name="Fisk D.G."/>
            <person name="Binkley G."/>
            <person name="Balakrishnan R."/>
            <person name="Costanzo M.C."/>
            <person name="Dwight S.S."/>
            <person name="Hitz B.C."/>
            <person name="Karra K."/>
            <person name="Nash R.S."/>
            <person name="Weng S."/>
            <person name="Wong E.D."/>
            <person name="Lloyd P."/>
            <person name="Skrzypek M.S."/>
            <person name="Miyasato S.R."/>
            <person name="Simison M."/>
            <person name="Cherry J.M."/>
        </authorList>
    </citation>
    <scope>GENOME REANNOTATION</scope>
    <source>
        <strain>ATCC 204508 / S288c</strain>
    </source>
</reference>
<reference key="6">
    <citation type="submission" date="1996-12" db="EMBL/GenBank/DDBJ databases">
        <title>Transcriptional regulation of bottom-fermenting yeast specific HSP12 gene.</title>
        <authorList>
            <person name="Sone H."/>
            <person name="Tomizuka K."/>
            <person name="Suda H."/>
            <person name="Iwamatsu A."/>
            <person name="Kondo K."/>
            <person name="Inouye M."/>
            <person name="Tanaka J."/>
        </authorList>
    </citation>
    <scope>NUCLEOTIDE SEQUENCE</scope>
    <source>
        <strain>KBY001</strain>
    </source>
</reference>
<reference key="7">
    <citation type="journal article" date="2002" name="Yeast">
        <title>HSP12 is essential for biofilm formation by a Sardinian wine strain of Saccharomyces cerevisiae.</title>
        <authorList>
            <person name="Zara S."/>
            <person name="Farris G.A."/>
            <person name="Budroni M."/>
            <person name="Bakalinsky A.T."/>
        </authorList>
    </citation>
    <scope>NUCLEOTIDE SEQUENCE [GENOMIC DNA]</scope>
    <source>
        <strain>Ar5-H12 / Arvisionadu wine isolate</strain>
    </source>
</reference>
<reference key="8">
    <citation type="journal article" date="2007" name="Genome Res.">
        <title>Approaching a complete repository of sequence-verified protein-encoding clones for Saccharomyces cerevisiae.</title>
        <authorList>
            <person name="Hu Y."/>
            <person name="Rolfs A."/>
            <person name="Bhullar B."/>
            <person name="Murthy T.V.S."/>
            <person name="Zhu C."/>
            <person name="Berger M.F."/>
            <person name="Camargo A.A."/>
            <person name="Kelley F."/>
            <person name="McCarron S."/>
            <person name="Jepson D."/>
            <person name="Richardson A."/>
            <person name="Raphael J."/>
            <person name="Moreira D."/>
            <person name="Taycher E."/>
            <person name="Zuo D."/>
            <person name="Mohr S."/>
            <person name="Kane M.F."/>
            <person name="Williamson J."/>
            <person name="Simpson A.J.G."/>
            <person name="Bulyk M.L."/>
            <person name="Harlow E."/>
            <person name="Marsischky G."/>
            <person name="Kolodner R.D."/>
            <person name="LaBaer J."/>
        </authorList>
    </citation>
    <scope>NUCLEOTIDE SEQUENCE [GENOMIC DNA]</scope>
    <source>
        <strain>ATCC 204508 / S288c</strain>
    </source>
</reference>
<reference key="9">
    <citation type="journal article" date="2003" name="Nature">
        <title>Global analysis of protein expression in yeast.</title>
        <authorList>
            <person name="Ghaemmaghami S."/>
            <person name="Huh W.-K."/>
            <person name="Bower K."/>
            <person name="Howson R.W."/>
            <person name="Belle A."/>
            <person name="Dephoure N."/>
            <person name="O'Shea E.K."/>
            <person name="Weissman J.S."/>
        </authorList>
    </citation>
    <scope>LEVEL OF PROTEIN EXPRESSION [LARGE SCALE ANALYSIS]</scope>
</reference>
<reference key="10">
    <citation type="journal article" date="2007" name="Proc. Natl. Acad. Sci. U.S.A.">
        <title>Analysis of phosphorylation sites on proteins from Saccharomyces cerevisiae by electron transfer dissociation (ETD) mass spectrometry.</title>
        <authorList>
            <person name="Chi A."/>
            <person name="Huttenhower C."/>
            <person name="Geer L.Y."/>
            <person name="Coon J.J."/>
            <person name="Syka J.E.P."/>
            <person name="Bai D.L."/>
            <person name="Shabanowitz J."/>
            <person name="Burke D.J."/>
            <person name="Troyanskaya O.G."/>
            <person name="Hunt D.F."/>
        </authorList>
    </citation>
    <scope>PHOSPHORYLATION [LARGE SCALE ANALYSIS] AT SER-21</scope>
    <scope>IDENTIFICATION BY MASS SPECTROMETRY [LARGE SCALE ANALYSIS]</scope>
</reference>
<reference key="11">
    <citation type="journal article" date="2008" name="Mol. Cell. Proteomics">
        <title>A multidimensional chromatography technology for in-depth phosphoproteome analysis.</title>
        <authorList>
            <person name="Albuquerque C.P."/>
            <person name="Smolka M.B."/>
            <person name="Payne S.H."/>
            <person name="Bafna V."/>
            <person name="Eng J."/>
            <person name="Zhou H."/>
        </authorList>
    </citation>
    <scope>PHOSPHORYLATION [LARGE SCALE ANALYSIS] AT SER-21; SER-59; SER-73 AND SER-97</scope>
    <scope>IDENTIFICATION BY MASS SPECTROMETRY [LARGE SCALE ANALYSIS]</scope>
</reference>
<reference key="12">
    <citation type="journal article" date="2009" name="Science">
        <title>Global analysis of Cdk1 substrate phosphorylation sites provides insights into evolution.</title>
        <authorList>
            <person name="Holt L.J."/>
            <person name="Tuch B.B."/>
            <person name="Villen J."/>
            <person name="Johnson A.D."/>
            <person name="Gygi S.P."/>
            <person name="Morgan D.O."/>
        </authorList>
    </citation>
    <scope>PHOSPHORYLATION [LARGE SCALE ANALYSIS] AT SER-21; SER-24; SER-59; SER-73 AND SER-97</scope>
    <scope>IDENTIFICATION BY MASS SPECTROMETRY [LARGE SCALE ANALYSIS]</scope>
</reference>
<accession>P22943</accession>
<accession>D6VTL5</accession>
<accession>Q8X145</accession>
<organism>
    <name type="scientific">Saccharomyces cerevisiae (strain ATCC 204508 / S288c)</name>
    <name type="common">Baker's yeast</name>
    <dbReference type="NCBI Taxonomy" id="559292"/>
    <lineage>
        <taxon>Eukaryota</taxon>
        <taxon>Fungi</taxon>
        <taxon>Dikarya</taxon>
        <taxon>Ascomycota</taxon>
        <taxon>Saccharomycotina</taxon>
        <taxon>Saccharomycetes</taxon>
        <taxon>Saccharomycetales</taxon>
        <taxon>Saccharomycetaceae</taxon>
        <taxon>Saccharomyces</taxon>
    </lineage>
</organism>
<comment type="function">
    <text>May play a role in a switch from carbohydrate utilizing metabolism to fatty acid utilizing metabolism.</text>
</comment>
<comment type="induction">
    <text>Strong, by heat shock, by entry in the stationary growth phase, and by cAMP, probably via the activity of a cAMP-dependent protein kinase. By glucose starvation and by fatty acids.</text>
</comment>
<comment type="miscellaneous">
    <text evidence="2">Present with 4490 molecules/cell in log phase SD medium.</text>
</comment>
<comment type="similarity">
    <text evidence="3">To S.pombe hsp9 and C.albicans WH11.</text>
</comment>
<sequence length="109" mass="11693">MSDAGRKGFGEKASEALKPDSQKSYAEQGKEYITDKADKVAGKVQPEDNKGVFQGVHDSAEKGKDNAEGQGESLADQARDYMGAAKSKLNDAVEYVSGRVHGEEDPTKK</sequence>
<gene>
    <name type="primary">HSP12</name>
    <name type="synonym">GLP1</name>
    <name type="synonym">HOR5</name>
    <name type="ordered locus">YFL014W</name>
</gene>
<name>HSP12_YEAST</name>
<dbReference type="EMBL" id="M60827">
    <property type="protein sequence ID" value="AAA34647.1"/>
    <property type="molecule type" value="Genomic_DNA"/>
</dbReference>
<dbReference type="EMBL" id="X55785">
    <property type="protein sequence ID" value="CAA39306.1"/>
    <property type="molecule type" value="mRNA"/>
</dbReference>
<dbReference type="EMBL" id="Z46255">
    <property type="protein sequence ID" value="CAA86349.1"/>
    <property type="molecule type" value="Genomic_DNA"/>
</dbReference>
<dbReference type="EMBL" id="D50617">
    <property type="protein sequence ID" value="BAA09224.1"/>
    <property type="molecule type" value="Genomic_DNA"/>
</dbReference>
<dbReference type="EMBL" id="D89864">
    <property type="protein sequence ID" value="BAA14033.1"/>
    <property type="molecule type" value="Genomic_DNA"/>
</dbReference>
<dbReference type="EMBL" id="AY046957">
    <property type="protein sequence ID" value="AAL06077.1"/>
    <property type="molecule type" value="Genomic_DNA"/>
</dbReference>
<dbReference type="EMBL" id="AY558464">
    <property type="protein sequence ID" value="AAS56790.1"/>
    <property type="molecule type" value="Genomic_DNA"/>
</dbReference>
<dbReference type="EMBL" id="BK006940">
    <property type="protein sequence ID" value="DAA12425.1"/>
    <property type="molecule type" value="Genomic_DNA"/>
</dbReference>
<dbReference type="PIR" id="S11179">
    <property type="entry name" value="HHBY12"/>
</dbReference>
<dbReference type="RefSeq" id="NP_116640.1">
    <property type="nucleotide sequence ID" value="NM_001179952.1"/>
</dbReference>
<dbReference type="PDB" id="2L9Q">
    <property type="method" value="NMR"/>
    <property type="chains" value="A=1-109"/>
</dbReference>
<dbReference type="PDB" id="2LJL">
    <property type="method" value="NMR"/>
    <property type="chains" value="A=1-109"/>
</dbReference>
<dbReference type="PDB" id="4AXP">
    <property type="method" value="NMR"/>
    <property type="chains" value="A=1-109"/>
</dbReference>
<dbReference type="PDBsum" id="2L9Q"/>
<dbReference type="PDBsum" id="2LJL"/>
<dbReference type="PDBsum" id="4AXP"/>
<dbReference type="BMRB" id="P22943"/>
<dbReference type="SMR" id="P22943"/>
<dbReference type="BioGRID" id="31132">
    <property type="interactions" value="79"/>
</dbReference>
<dbReference type="DIP" id="DIP-6408N"/>
<dbReference type="FunCoup" id="P22943">
    <property type="interactions" value="207"/>
</dbReference>
<dbReference type="IntAct" id="P22943">
    <property type="interactions" value="7"/>
</dbReference>
<dbReference type="MINT" id="P22943"/>
<dbReference type="STRING" id="4932.YFL014W"/>
<dbReference type="iPTMnet" id="P22943"/>
<dbReference type="PaxDb" id="4932-YFL014W"/>
<dbReference type="PeptideAtlas" id="P22943"/>
<dbReference type="TopDownProteomics" id="P22943"/>
<dbReference type="EnsemblFungi" id="YFL014W_mRNA">
    <property type="protein sequence ID" value="YFL014W"/>
    <property type="gene ID" value="YFL014W"/>
</dbReference>
<dbReference type="GeneID" id="850532"/>
<dbReference type="KEGG" id="sce:YFL014W"/>
<dbReference type="AGR" id="SGD:S000001880"/>
<dbReference type="SGD" id="S000001880">
    <property type="gene designation" value="HSP12"/>
</dbReference>
<dbReference type="VEuPathDB" id="FungiDB:YFL014W"/>
<dbReference type="eggNOG" id="ENOG502S44P">
    <property type="taxonomic scope" value="Eukaryota"/>
</dbReference>
<dbReference type="HOGENOM" id="CLU_102617_1_1_1"/>
<dbReference type="InParanoid" id="P22943"/>
<dbReference type="OMA" id="NKGVFQG"/>
<dbReference type="OrthoDB" id="2348401at2759"/>
<dbReference type="BioCyc" id="YEAST:G3O-30442-MONOMER"/>
<dbReference type="BioGRID-ORCS" id="850532">
    <property type="hits" value="8 hits in 10 CRISPR screens"/>
</dbReference>
<dbReference type="EvolutionaryTrace" id="P22943"/>
<dbReference type="PRO" id="PR:P22943"/>
<dbReference type="Proteomes" id="UP000002311">
    <property type="component" value="Chromosome VI"/>
</dbReference>
<dbReference type="RNAct" id="P22943">
    <property type="molecule type" value="protein"/>
</dbReference>
<dbReference type="GO" id="GO:0005737">
    <property type="term" value="C:cytoplasm"/>
    <property type="evidence" value="ECO:0007005"/>
    <property type="project" value="SGD"/>
</dbReference>
<dbReference type="GO" id="GO:0005829">
    <property type="term" value="C:cytosol"/>
    <property type="evidence" value="ECO:0000314"/>
    <property type="project" value="SGD"/>
</dbReference>
<dbReference type="GO" id="GO:0005768">
    <property type="term" value="C:endosome"/>
    <property type="evidence" value="ECO:0000314"/>
    <property type="project" value="SGD"/>
</dbReference>
<dbReference type="GO" id="GO:0005634">
    <property type="term" value="C:nucleus"/>
    <property type="evidence" value="ECO:0007005"/>
    <property type="project" value="SGD"/>
</dbReference>
<dbReference type="GO" id="GO:0005886">
    <property type="term" value="C:plasma membrane"/>
    <property type="evidence" value="ECO:0000314"/>
    <property type="project" value="SGD"/>
</dbReference>
<dbReference type="GO" id="GO:0008289">
    <property type="term" value="F:lipid binding"/>
    <property type="evidence" value="ECO:0000314"/>
    <property type="project" value="SGD"/>
</dbReference>
<dbReference type="GO" id="GO:0044183">
    <property type="term" value="F:protein folding chaperone"/>
    <property type="evidence" value="ECO:0000269"/>
    <property type="project" value="DisProt"/>
</dbReference>
<dbReference type="GO" id="GO:0007155">
    <property type="term" value="P:cell adhesion"/>
    <property type="evidence" value="ECO:0000314"/>
    <property type="project" value="SGD"/>
</dbReference>
<dbReference type="GO" id="GO:0034605">
    <property type="term" value="P:cellular response to heat"/>
    <property type="evidence" value="ECO:0000315"/>
    <property type="project" value="SGD"/>
</dbReference>
<dbReference type="GO" id="GO:0071470">
    <property type="term" value="P:cellular response to osmotic stress"/>
    <property type="evidence" value="ECO:0000315"/>
    <property type="project" value="SGD"/>
</dbReference>
<dbReference type="GO" id="GO:0034599">
    <property type="term" value="P:cellular response to oxidative stress"/>
    <property type="evidence" value="ECO:0000315"/>
    <property type="project" value="SGD"/>
</dbReference>
<dbReference type="GO" id="GO:0007009">
    <property type="term" value="P:plasma membrane organization"/>
    <property type="evidence" value="ECO:0000315"/>
    <property type="project" value="SGD"/>
</dbReference>
<dbReference type="Gene3D" id="6.10.280.100">
    <property type="match status" value="1"/>
</dbReference>
<dbReference type="InterPro" id="IPR007250">
    <property type="entry name" value="HSP9_HSP12"/>
</dbReference>
<dbReference type="Pfam" id="PF04119">
    <property type="entry name" value="HSP9_HSP12"/>
    <property type="match status" value="1"/>
</dbReference>
<dbReference type="PIRSF" id="PIRSF002590">
    <property type="entry name" value="HSP9/HSP12_fun"/>
    <property type="match status" value="1"/>
</dbReference>